<evidence type="ECO:0000255" key="1">
    <source>
        <dbReference type="HAMAP-Rule" id="MF_01401"/>
    </source>
</evidence>
<organism>
    <name type="scientific">Shigella boydii serotype 4 (strain Sb227)</name>
    <dbReference type="NCBI Taxonomy" id="300268"/>
    <lineage>
        <taxon>Bacteria</taxon>
        <taxon>Pseudomonadati</taxon>
        <taxon>Pseudomonadota</taxon>
        <taxon>Gammaproteobacteria</taxon>
        <taxon>Enterobacterales</taxon>
        <taxon>Enterobacteriaceae</taxon>
        <taxon>Shigella</taxon>
    </lineage>
</organism>
<accession>Q31TF9</accession>
<dbReference type="EC" id="1.8.4.11" evidence="1"/>
<dbReference type="EMBL" id="CP000036">
    <property type="protein sequence ID" value="ABB68649.1"/>
    <property type="molecule type" value="Genomic_DNA"/>
</dbReference>
<dbReference type="RefSeq" id="WP_004988379.1">
    <property type="nucleotide sequence ID" value="NC_007613.1"/>
</dbReference>
<dbReference type="SMR" id="Q31TF9"/>
<dbReference type="KEGG" id="sbo:SBO_4224"/>
<dbReference type="HOGENOM" id="CLU_031040_10_3_6"/>
<dbReference type="Proteomes" id="UP000007067">
    <property type="component" value="Chromosome"/>
</dbReference>
<dbReference type="GO" id="GO:0005737">
    <property type="term" value="C:cytoplasm"/>
    <property type="evidence" value="ECO:0007669"/>
    <property type="project" value="TreeGrafter"/>
</dbReference>
<dbReference type="GO" id="GO:0036456">
    <property type="term" value="F:L-methionine-(S)-S-oxide reductase activity"/>
    <property type="evidence" value="ECO:0007669"/>
    <property type="project" value="TreeGrafter"/>
</dbReference>
<dbReference type="GO" id="GO:0008113">
    <property type="term" value="F:peptide-methionine (S)-S-oxide reductase activity"/>
    <property type="evidence" value="ECO:0007669"/>
    <property type="project" value="UniProtKB-UniRule"/>
</dbReference>
<dbReference type="GO" id="GO:0034599">
    <property type="term" value="P:cellular response to oxidative stress"/>
    <property type="evidence" value="ECO:0007669"/>
    <property type="project" value="TreeGrafter"/>
</dbReference>
<dbReference type="GO" id="GO:0036211">
    <property type="term" value="P:protein modification process"/>
    <property type="evidence" value="ECO:0007669"/>
    <property type="project" value="UniProtKB-UniRule"/>
</dbReference>
<dbReference type="FunFam" id="3.30.1060.10:FF:000001">
    <property type="entry name" value="Peptide methionine sulfoxide reductase MsrA"/>
    <property type="match status" value="1"/>
</dbReference>
<dbReference type="Gene3D" id="3.30.1060.10">
    <property type="entry name" value="Peptide methionine sulphoxide reductase MsrA"/>
    <property type="match status" value="1"/>
</dbReference>
<dbReference type="HAMAP" id="MF_01401">
    <property type="entry name" value="MsrA"/>
    <property type="match status" value="1"/>
</dbReference>
<dbReference type="InterPro" id="IPR002569">
    <property type="entry name" value="Met_Sox_Rdtase_MsrA_dom"/>
</dbReference>
<dbReference type="InterPro" id="IPR036509">
    <property type="entry name" value="Met_Sox_Rdtase_MsrA_sf"/>
</dbReference>
<dbReference type="InterPro" id="IPR050162">
    <property type="entry name" value="MsrA_MetSO_reductase"/>
</dbReference>
<dbReference type="NCBIfam" id="TIGR00401">
    <property type="entry name" value="msrA"/>
    <property type="match status" value="1"/>
</dbReference>
<dbReference type="PANTHER" id="PTHR42799">
    <property type="entry name" value="MITOCHONDRIAL PEPTIDE METHIONINE SULFOXIDE REDUCTASE"/>
    <property type="match status" value="1"/>
</dbReference>
<dbReference type="PANTHER" id="PTHR42799:SF2">
    <property type="entry name" value="MITOCHONDRIAL PEPTIDE METHIONINE SULFOXIDE REDUCTASE"/>
    <property type="match status" value="1"/>
</dbReference>
<dbReference type="Pfam" id="PF01625">
    <property type="entry name" value="PMSR"/>
    <property type="match status" value="1"/>
</dbReference>
<dbReference type="SUPFAM" id="SSF55068">
    <property type="entry name" value="Peptide methionine sulfoxide reductase"/>
    <property type="match status" value="1"/>
</dbReference>
<comment type="function">
    <text evidence="1">Has an important function as a repair enzyme for proteins that have been inactivated by oxidation. Catalyzes the reversible oxidation-reduction of methionine sulfoxide in proteins to methionine.</text>
</comment>
<comment type="catalytic activity">
    <reaction evidence="1">
        <text>L-methionyl-[protein] + [thioredoxin]-disulfide + H2O = L-methionyl-(S)-S-oxide-[protein] + [thioredoxin]-dithiol</text>
        <dbReference type="Rhea" id="RHEA:14217"/>
        <dbReference type="Rhea" id="RHEA-COMP:10698"/>
        <dbReference type="Rhea" id="RHEA-COMP:10700"/>
        <dbReference type="Rhea" id="RHEA-COMP:12313"/>
        <dbReference type="Rhea" id="RHEA-COMP:12315"/>
        <dbReference type="ChEBI" id="CHEBI:15377"/>
        <dbReference type="ChEBI" id="CHEBI:16044"/>
        <dbReference type="ChEBI" id="CHEBI:29950"/>
        <dbReference type="ChEBI" id="CHEBI:44120"/>
        <dbReference type="ChEBI" id="CHEBI:50058"/>
        <dbReference type="EC" id="1.8.4.11"/>
    </reaction>
</comment>
<comment type="catalytic activity">
    <reaction evidence="1">
        <text>[thioredoxin]-disulfide + L-methionine + H2O = L-methionine (S)-S-oxide + [thioredoxin]-dithiol</text>
        <dbReference type="Rhea" id="RHEA:19993"/>
        <dbReference type="Rhea" id="RHEA-COMP:10698"/>
        <dbReference type="Rhea" id="RHEA-COMP:10700"/>
        <dbReference type="ChEBI" id="CHEBI:15377"/>
        <dbReference type="ChEBI" id="CHEBI:29950"/>
        <dbReference type="ChEBI" id="CHEBI:50058"/>
        <dbReference type="ChEBI" id="CHEBI:57844"/>
        <dbReference type="ChEBI" id="CHEBI:58772"/>
        <dbReference type="EC" id="1.8.4.11"/>
    </reaction>
</comment>
<comment type="similarity">
    <text evidence="1">Belongs to the MsrA Met sulfoxide reductase family.</text>
</comment>
<keyword id="KW-0560">Oxidoreductase</keyword>
<protein>
    <recommendedName>
        <fullName evidence="1">Peptide methionine sulfoxide reductase MsrA</fullName>
        <shortName evidence="1">Protein-methionine-S-oxide reductase</shortName>
        <ecNumber evidence="1">1.8.4.11</ecNumber>
    </recommendedName>
    <alternativeName>
        <fullName evidence="1">Peptide-methionine (S)-S-oxide reductase</fullName>
        <shortName evidence="1">Peptide Met(O) reductase</shortName>
    </alternativeName>
</protein>
<sequence length="212" mass="23345">MSLFDKKHLVSPADALPGRNTPMPVATLHAVNGHSMTNEPDGMEIAIFAMGCFWGVERLFWQLPGVYSTAAGYTGGYTPNPTYREVCSGDTGHAEAVRIVYDPSVISYEQLLQVFWENHDPAQGMRQGNDHGTQYRSAIYPLTPEQDAAARASLERFQAAMLAADDDRHITTEIANATPFYYAEDDHQQYLHKNPYGYCGIGGIGVCLPPEA</sequence>
<proteinExistence type="inferred from homology"/>
<feature type="chain" id="PRO_1000068359" description="Peptide methionine sulfoxide reductase MsrA">
    <location>
        <begin position="1"/>
        <end position="212"/>
    </location>
</feature>
<feature type="active site" evidence="1">
    <location>
        <position position="52"/>
    </location>
</feature>
<reference key="1">
    <citation type="journal article" date="2005" name="Nucleic Acids Res.">
        <title>Genome dynamics and diversity of Shigella species, the etiologic agents of bacillary dysentery.</title>
        <authorList>
            <person name="Yang F."/>
            <person name="Yang J."/>
            <person name="Zhang X."/>
            <person name="Chen L."/>
            <person name="Jiang Y."/>
            <person name="Yan Y."/>
            <person name="Tang X."/>
            <person name="Wang J."/>
            <person name="Xiong Z."/>
            <person name="Dong J."/>
            <person name="Xue Y."/>
            <person name="Zhu Y."/>
            <person name="Xu X."/>
            <person name="Sun L."/>
            <person name="Chen S."/>
            <person name="Nie H."/>
            <person name="Peng J."/>
            <person name="Xu J."/>
            <person name="Wang Y."/>
            <person name="Yuan Z."/>
            <person name="Wen Y."/>
            <person name="Yao Z."/>
            <person name="Shen Y."/>
            <person name="Qiang B."/>
            <person name="Hou Y."/>
            <person name="Yu J."/>
            <person name="Jin Q."/>
        </authorList>
    </citation>
    <scope>NUCLEOTIDE SEQUENCE [LARGE SCALE GENOMIC DNA]</scope>
    <source>
        <strain>Sb227</strain>
    </source>
</reference>
<gene>
    <name evidence="1" type="primary">msrA</name>
    <name type="ordered locus">SBO_4224</name>
</gene>
<name>MSRA_SHIBS</name>